<feature type="chain" id="PRO_0000120589" description="NAD kinase 1">
    <location>
        <begin position="1"/>
        <end position="306"/>
    </location>
</feature>
<feature type="active site" description="Proton acceptor" evidence="1">
    <location>
        <position position="67"/>
    </location>
</feature>
<feature type="binding site" evidence="1">
    <location>
        <begin position="67"/>
        <end position="68"/>
    </location>
    <ligand>
        <name>NAD(+)</name>
        <dbReference type="ChEBI" id="CHEBI:57540"/>
    </ligand>
</feature>
<feature type="binding site" evidence="1">
    <location>
        <begin position="149"/>
        <end position="150"/>
    </location>
    <ligand>
        <name>NAD(+)</name>
        <dbReference type="ChEBI" id="CHEBI:57540"/>
    </ligand>
</feature>
<feature type="binding site" evidence="1">
    <location>
        <position position="181"/>
    </location>
    <ligand>
        <name>NAD(+)</name>
        <dbReference type="ChEBI" id="CHEBI:57540"/>
    </ligand>
</feature>
<feature type="binding site" evidence="1">
    <location>
        <begin position="192"/>
        <end position="197"/>
    </location>
    <ligand>
        <name>NAD(+)</name>
        <dbReference type="ChEBI" id="CHEBI:57540"/>
    </ligand>
</feature>
<evidence type="ECO:0000255" key="1">
    <source>
        <dbReference type="HAMAP-Rule" id="MF_00361"/>
    </source>
</evidence>
<comment type="function">
    <text evidence="1">Involved in the regulation of the intracellular balance of NAD and NADP, and is a key enzyme in the biosynthesis of NADP. Catalyzes specifically the phosphorylation on 2'-hydroxyl of the adenosine moiety of NAD to yield NADP.</text>
</comment>
<comment type="catalytic activity">
    <reaction evidence="1">
        <text>NAD(+) + ATP = ADP + NADP(+) + H(+)</text>
        <dbReference type="Rhea" id="RHEA:18629"/>
        <dbReference type="ChEBI" id="CHEBI:15378"/>
        <dbReference type="ChEBI" id="CHEBI:30616"/>
        <dbReference type="ChEBI" id="CHEBI:57540"/>
        <dbReference type="ChEBI" id="CHEBI:58349"/>
        <dbReference type="ChEBI" id="CHEBI:456216"/>
        <dbReference type="EC" id="2.7.1.23"/>
    </reaction>
</comment>
<comment type="cofactor">
    <cofactor evidence="1">
        <name>a divalent metal cation</name>
        <dbReference type="ChEBI" id="CHEBI:60240"/>
    </cofactor>
</comment>
<comment type="subcellular location">
    <subcellularLocation>
        <location evidence="1">Cytoplasm</location>
    </subcellularLocation>
</comment>
<comment type="similarity">
    <text evidence="1">Belongs to the NAD kinase family.</text>
</comment>
<keyword id="KW-0067">ATP-binding</keyword>
<keyword id="KW-0963">Cytoplasm</keyword>
<keyword id="KW-0418">Kinase</keyword>
<keyword id="KW-0520">NAD</keyword>
<keyword id="KW-0521">NADP</keyword>
<keyword id="KW-0547">Nucleotide-binding</keyword>
<keyword id="KW-1185">Reference proteome</keyword>
<keyword id="KW-0808">Transferase</keyword>
<reference key="1">
    <citation type="journal article" date="2001" name="DNA Res.">
        <title>Complete genomic sequence of the filamentous nitrogen-fixing cyanobacterium Anabaena sp. strain PCC 7120.</title>
        <authorList>
            <person name="Kaneko T."/>
            <person name="Nakamura Y."/>
            <person name="Wolk C.P."/>
            <person name="Kuritz T."/>
            <person name="Sasamoto S."/>
            <person name="Watanabe A."/>
            <person name="Iriguchi M."/>
            <person name="Ishikawa A."/>
            <person name="Kawashima K."/>
            <person name="Kimura T."/>
            <person name="Kishida Y."/>
            <person name="Kohara M."/>
            <person name="Matsumoto M."/>
            <person name="Matsuno A."/>
            <person name="Muraki A."/>
            <person name="Nakazaki N."/>
            <person name="Shimpo S."/>
            <person name="Sugimoto M."/>
            <person name="Takazawa M."/>
            <person name="Yamada M."/>
            <person name="Yasuda M."/>
            <person name="Tabata S."/>
        </authorList>
    </citation>
    <scope>NUCLEOTIDE SEQUENCE [LARGE SCALE GENOMIC DNA]</scope>
    <source>
        <strain>PCC 7120 / SAG 25.82 / UTEX 2576</strain>
    </source>
</reference>
<proteinExistence type="inferred from homology"/>
<organism>
    <name type="scientific">Nostoc sp. (strain PCC 7120 / SAG 25.82 / UTEX 2576)</name>
    <dbReference type="NCBI Taxonomy" id="103690"/>
    <lineage>
        <taxon>Bacteria</taxon>
        <taxon>Bacillati</taxon>
        <taxon>Cyanobacteriota</taxon>
        <taxon>Cyanophyceae</taxon>
        <taxon>Nostocales</taxon>
        <taxon>Nostocaceae</taxon>
        <taxon>Nostoc</taxon>
    </lineage>
</organism>
<accession>Q8Z074</accession>
<name>NADK1_NOSS1</name>
<dbReference type="EC" id="2.7.1.23" evidence="1"/>
<dbReference type="EMBL" id="BA000019">
    <property type="protein sequence ID" value="BAB77751.1"/>
    <property type="molecule type" value="Genomic_DNA"/>
</dbReference>
<dbReference type="PIR" id="AC1835">
    <property type="entry name" value="AC1835"/>
</dbReference>
<dbReference type="RefSeq" id="WP_010994404.1">
    <property type="nucleotide sequence ID" value="NZ_RSCN01000026.1"/>
</dbReference>
<dbReference type="SMR" id="Q8Z074"/>
<dbReference type="STRING" id="103690.gene:10492234"/>
<dbReference type="KEGG" id="ana:alr0227"/>
<dbReference type="eggNOG" id="COG0061">
    <property type="taxonomic scope" value="Bacteria"/>
</dbReference>
<dbReference type="OrthoDB" id="9774737at2"/>
<dbReference type="Proteomes" id="UP000002483">
    <property type="component" value="Chromosome"/>
</dbReference>
<dbReference type="GO" id="GO:0005737">
    <property type="term" value="C:cytoplasm"/>
    <property type="evidence" value="ECO:0007669"/>
    <property type="project" value="UniProtKB-SubCell"/>
</dbReference>
<dbReference type="GO" id="GO:0005524">
    <property type="term" value="F:ATP binding"/>
    <property type="evidence" value="ECO:0007669"/>
    <property type="project" value="UniProtKB-KW"/>
</dbReference>
<dbReference type="GO" id="GO:0046872">
    <property type="term" value="F:metal ion binding"/>
    <property type="evidence" value="ECO:0007669"/>
    <property type="project" value="UniProtKB-UniRule"/>
</dbReference>
<dbReference type="GO" id="GO:0051287">
    <property type="term" value="F:NAD binding"/>
    <property type="evidence" value="ECO:0007669"/>
    <property type="project" value="UniProtKB-ARBA"/>
</dbReference>
<dbReference type="GO" id="GO:0003951">
    <property type="term" value="F:NAD+ kinase activity"/>
    <property type="evidence" value="ECO:0007669"/>
    <property type="project" value="UniProtKB-UniRule"/>
</dbReference>
<dbReference type="GO" id="GO:0019674">
    <property type="term" value="P:NAD metabolic process"/>
    <property type="evidence" value="ECO:0007669"/>
    <property type="project" value="InterPro"/>
</dbReference>
<dbReference type="GO" id="GO:0006741">
    <property type="term" value="P:NADP biosynthetic process"/>
    <property type="evidence" value="ECO:0007669"/>
    <property type="project" value="UniProtKB-UniRule"/>
</dbReference>
<dbReference type="Gene3D" id="3.40.50.10330">
    <property type="entry name" value="Probable inorganic polyphosphate/atp-NAD kinase, domain 1"/>
    <property type="match status" value="1"/>
</dbReference>
<dbReference type="Gene3D" id="2.60.200.30">
    <property type="entry name" value="Probable inorganic polyphosphate/atp-NAD kinase, domain 2"/>
    <property type="match status" value="1"/>
</dbReference>
<dbReference type="HAMAP" id="MF_00361">
    <property type="entry name" value="NAD_kinase"/>
    <property type="match status" value="1"/>
</dbReference>
<dbReference type="InterPro" id="IPR017438">
    <property type="entry name" value="ATP-NAD_kinase_N"/>
</dbReference>
<dbReference type="InterPro" id="IPR017437">
    <property type="entry name" value="ATP-NAD_kinase_PpnK-typ_C"/>
</dbReference>
<dbReference type="InterPro" id="IPR016064">
    <property type="entry name" value="NAD/diacylglycerol_kinase_sf"/>
</dbReference>
<dbReference type="InterPro" id="IPR002504">
    <property type="entry name" value="NADK"/>
</dbReference>
<dbReference type="NCBIfam" id="NF002731">
    <property type="entry name" value="PRK02645.1"/>
    <property type="match status" value="1"/>
</dbReference>
<dbReference type="PANTHER" id="PTHR20275">
    <property type="entry name" value="NAD KINASE"/>
    <property type="match status" value="1"/>
</dbReference>
<dbReference type="PANTHER" id="PTHR20275:SF0">
    <property type="entry name" value="NAD KINASE"/>
    <property type="match status" value="1"/>
</dbReference>
<dbReference type="Pfam" id="PF01513">
    <property type="entry name" value="NAD_kinase"/>
    <property type="match status" value="1"/>
</dbReference>
<dbReference type="Pfam" id="PF20143">
    <property type="entry name" value="NAD_kinase_C"/>
    <property type="match status" value="1"/>
</dbReference>
<dbReference type="SUPFAM" id="SSF111331">
    <property type="entry name" value="NAD kinase/diacylglycerol kinase-like"/>
    <property type="match status" value="1"/>
</dbReference>
<sequence length="306" mass="33933">MQLKQVIIAYKARDSQSKRWAELCAKQLENRNCQVLMGPSGPKDNPYPVFLASASQPIDLAIVLGGDGTVLTSARHLAPAGIPILGVNVGGHLGFLTESVDEFQDTEKVWDRLFEDRYAIQRRMMLQAAVYEGHRTNLEPVTERYLGLNEFCVKPASADRMITSILEMEIDGEVVDQYVGDGLIISTPTGSTGYTVSASGPIMHDGMEAITITPICPMSLSSRPLILPAGSVVSIWPLGDYDLSTKLWMDGVLATSIWPAHRVDIRMADCRAKFIVLRENNSYYQTLREKLLWAGTRVRYTSTQHN</sequence>
<protein>
    <recommendedName>
        <fullName evidence="1">NAD kinase 1</fullName>
        <ecNumber evidence="1">2.7.1.23</ecNumber>
    </recommendedName>
    <alternativeName>
        <fullName evidence="1">ATP-dependent NAD kinase 1</fullName>
    </alternativeName>
</protein>
<gene>
    <name evidence="1" type="primary">nadK1</name>
    <name type="ordered locus">alr0227</name>
</gene>